<name>ACS2_RUTGR</name>
<gene>
    <name type="primary">ACS2</name>
</gene>
<organism>
    <name type="scientific">Ruta graveolens</name>
    <name type="common">Common rue</name>
    <dbReference type="NCBI Taxonomy" id="37565"/>
    <lineage>
        <taxon>Eukaryota</taxon>
        <taxon>Viridiplantae</taxon>
        <taxon>Streptophyta</taxon>
        <taxon>Embryophyta</taxon>
        <taxon>Tracheophyta</taxon>
        <taxon>Spermatophyta</taxon>
        <taxon>Magnoliopsida</taxon>
        <taxon>eudicotyledons</taxon>
        <taxon>Gunneridae</taxon>
        <taxon>Pentapetalae</taxon>
        <taxon>rosids</taxon>
        <taxon>malvids</taxon>
        <taxon>Sapindales</taxon>
        <taxon>Rutaceae</taxon>
        <taxon>Rutoideae</taxon>
        <taxon>Ruta</taxon>
    </lineage>
</organism>
<keyword id="KW-0012">Acyltransferase</keyword>
<keyword id="KW-0284">Flavonoid biosynthesis</keyword>
<keyword id="KW-0808">Transferase</keyword>
<protein>
    <recommendedName>
        <fullName>Acridone synthase 2</fullName>
        <ecNumber>2.3.1.159</ecNumber>
    </recommendedName>
    <alternativeName>
        <fullName>Acridone synthase II</fullName>
    </alternativeName>
</protein>
<feature type="chain" id="PRO_0000216087" description="Acridone synthase 2">
    <location>
        <begin position="1"/>
        <end position="391"/>
    </location>
</feature>
<feature type="active site" evidence="1">
    <location>
        <position position="164"/>
    </location>
</feature>
<accession>Q9FSC0</accession>
<reference key="1">
    <citation type="journal article" date="1999" name="FEBS Lett.">
        <title>Native acridone synthases I and II from Ruta graveolens L. form homodimers.</title>
        <authorList>
            <person name="Lukacin R."/>
            <person name="Springob K."/>
            <person name="Urbanke C."/>
            <person name="Ernwein C."/>
            <person name="Schroeder G."/>
            <person name="Schroeder J."/>
            <person name="Matern U."/>
        </authorList>
    </citation>
    <scope>NUCLEOTIDE SEQUENCE [MRNA]</scope>
    <scope>SUBUNIT</scope>
</reference>
<comment type="catalytic activity">
    <reaction>
        <text>N-methylanthraniloyl-CoA + 3 malonyl-CoA + 3 H(+) = 1,3-dihydroxy-N-methylacridone + 3 CO2 + 4 CoA + H2O</text>
        <dbReference type="Rhea" id="RHEA:22224"/>
        <dbReference type="ChEBI" id="CHEBI:15377"/>
        <dbReference type="ChEBI" id="CHEBI:15378"/>
        <dbReference type="ChEBI" id="CHEBI:16526"/>
        <dbReference type="ChEBI" id="CHEBI:30306"/>
        <dbReference type="ChEBI" id="CHEBI:57287"/>
        <dbReference type="ChEBI" id="CHEBI:57384"/>
        <dbReference type="ChEBI" id="CHEBI:58630"/>
        <dbReference type="EC" id="2.3.1.159"/>
    </reaction>
</comment>
<comment type="subunit">
    <text evidence="2">Homodimer.</text>
</comment>
<comment type="similarity">
    <text evidence="3">Belongs to the thiolase-like superfamily. Chalcone/stilbene synthases family.</text>
</comment>
<proteinExistence type="evidence at protein level"/>
<dbReference type="EC" id="2.3.1.159"/>
<dbReference type="EMBL" id="AJ297788">
    <property type="protein sequence ID" value="CAC14058.1"/>
    <property type="molecule type" value="mRNA"/>
</dbReference>
<dbReference type="SMR" id="Q9FSC0"/>
<dbReference type="KEGG" id="ag:CAC14058"/>
<dbReference type="BioCyc" id="MetaCyc:MONOMER-14039"/>
<dbReference type="BRENDA" id="2.3.1.159">
    <property type="organism ID" value="5486"/>
</dbReference>
<dbReference type="SABIO-RK" id="Q9FSC0"/>
<dbReference type="GO" id="GO:0050635">
    <property type="term" value="F:acridone synthase activity"/>
    <property type="evidence" value="ECO:0007669"/>
    <property type="project" value="UniProtKB-EC"/>
</dbReference>
<dbReference type="GO" id="GO:0009813">
    <property type="term" value="P:flavonoid biosynthetic process"/>
    <property type="evidence" value="ECO:0007669"/>
    <property type="project" value="UniProtKB-KW"/>
</dbReference>
<dbReference type="GO" id="GO:0030639">
    <property type="term" value="P:polyketide biosynthetic process"/>
    <property type="evidence" value="ECO:0007669"/>
    <property type="project" value="TreeGrafter"/>
</dbReference>
<dbReference type="CDD" id="cd00831">
    <property type="entry name" value="CHS_like"/>
    <property type="match status" value="1"/>
</dbReference>
<dbReference type="FunFam" id="3.40.47.10:FF:000014">
    <property type="entry name" value="Chalcone synthase 1"/>
    <property type="match status" value="1"/>
</dbReference>
<dbReference type="FunFam" id="3.40.47.10:FF:000025">
    <property type="entry name" value="Chalcone synthase 2"/>
    <property type="match status" value="1"/>
</dbReference>
<dbReference type="Gene3D" id="3.40.47.10">
    <property type="match status" value="2"/>
</dbReference>
<dbReference type="InterPro" id="IPR012328">
    <property type="entry name" value="Chalcone/stilbene_synt_C"/>
</dbReference>
<dbReference type="InterPro" id="IPR001099">
    <property type="entry name" value="Chalcone/stilbene_synt_N"/>
</dbReference>
<dbReference type="InterPro" id="IPR018088">
    <property type="entry name" value="Chalcone/stilbene_synthase_AS"/>
</dbReference>
<dbReference type="InterPro" id="IPR011141">
    <property type="entry name" value="Polyketide_synthase_type-III"/>
</dbReference>
<dbReference type="InterPro" id="IPR016039">
    <property type="entry name" value="Thiolase-like"/>
</dbReference>
<dbReference type="PANTHER" id="PTHR11877:SF14">
    <property type="entry name" value="CHALCONE SYNTHASE"/>
    <property type="match status" value="1"/>
</dbReference>
<dbReference type="PANTHER" id="PTHR11877">
    <property type="entry name" value="HYDROXYMETHYLGLUTARYL-COA SYNTHASE"/>
    <property type="match status" value="1"/>
</dbReference>
<dbReference type="Pfam" id="PF02797">
    <property type="entry name" value="Chal_sti_synt_C"/>
    <property type="match status" value="1"/>
</dbReference>
<dbReference type="Pfam" id="PF00195">
    <property type="entry name" value="Chal_sti_synt_N"/>
    <property type="match status" value="1"/>
</dbReference>
<dbReference type="PIRSF" id="PIRSF000451">
    <property type="entry name" value="PKS_III"/>
    <property type="match status" value="1"/>
</dbReference>
<dbReference type="SUPFAM" id="SSF53901">
    <property type="entry name" value="Thiolase-like"/>
    <property type="match status" value="2"/>
</dbReference>
<dbReference type="PROSITE" id="PS00441">
    <property type="entry name" value="CHALCONE_SYNTH"/>
    <property type="match status" value="1"/>
</dbReference>
<sequence>MESLKEMRKAQKSEGPAAILAIGTATPDNVYIQADYPDYYFKITKSEHMTELKDKFKTLCEKSMIRKRHMCFSQEFLKANPEVCKHMGKSLNARQDIAVVETPRIGKEAAVKAIKEWGHPKSSITHLIFCTSAGVDMPGADYQLTRMLGLNPSVKRMMIYQQGCYAGGTVLRLAKDLAENNKGSRVLVVCSELTAPTFRGPSPDAVDSLVGQALFADGAAALVVGADPDTSVERALYYIVSASQMLLPDSDGAIEGHIREEGLTVHLKKDVPALFSANIDTPLVEAFRPLGISDWNSIFWIAHPGGPAILDQIEVKLGLKEDKLRASKHVMSEYGNMSSSCVLFVLDEMRNKSLQDGKSTTGEGLDWGVLFGFGPGLTVETVVLRSVPVEA</sequence>
<evidence type="ECO:0000255" key="1">
    <source>
        <dbReference type="PROSITE-ProRule" id="PRU10023"/>
    </source>
</evidence>
<evidence type="ECO:0000269" key="2">
    <source>
    </source>
</evidence>
<evidence type="ECO:0000305" key="3"/>